<name>MSCL_SPHAL</name>
<reference key="1">
    <citation type="journal article" date="2009" name="Proc. Natl. Acad. Sci. U.S.A.">
        <title>The genomic basis of trophic strategy in marine bacteria.</title>
        <authorList>
            <person name="Lauro F.M."/>
            <person name="McDougald D."/>
            <person name="Thomas T."/>
            <person name="Williams T.J."/>
            <person name="Egan S."/>
            <person name="Rice S."/>
            <person name="DeMaere M.Z."/>
            <person name="Ting L."/>
            <person name="Ertan H."/>
            <person name="Johnson J."/>
            <person name="Ferriera S."/>
            <person name="Lapidus A."/>
            <person name="Anderson I."/>
            <person name="Kyrpides N."/>
            <person name="Munk A.C."/>
            <person name="Detter C."/>
            <person name="Han C.S."/>
            <person name="Brown M.V."/>
            <person name="Robb F.T."/>
            <person name="Kjelleberg S."/>
            <person name="Cavicchioli R."/>
        </authorList>
    </citation>
    <scope>NUCLEOTIDE SEQUENCE [LARGE SCALE GENOMIC DNA]</scope>
    <source>
        <strain>DSM 13593 / LMG 18877 / RB2256</strain>
    </source>
</reference>
<protein>
    <recommendedName>
        <fullName evidence="1">Large-conductance mechanosensitive channel</fullName>
    </recommendedName>
</protein>
<comment type="function">
    <text evidence="1">Channel that opens in response to stretch forces in the membrane lipid bilayer. May participate in the regulation of osmotic pressure changes within the cell.</text>
</comment>
<comment type="subunit">
    <text evidence="1">Homopentamer.</text>
</comment>
<comment type="subcellular location">
    <subcellularLocation>
        <location evidence="1">Cell inner membrane</location>
        <topology evidence="1">Multi-pass membrane protein</topology>
    </subcellularLocation>
</comment>
<comment type="similarity">
    <text evidence="1">Belongs to the MscL family.</text>
</comment>
<keyword id="KW-0997">Cell inner membrane</keyword>
<keyword id="KW-1003">Cell membrane</keyword>
<keyword id="KW-0407">Ion channel</keyword>
<keyword id="KW-0406">Ion transport</keyword>
<keyword id="KW-0472">Membrane</keyword>
<keyword id="KW-1185">Reference proteome</keyword>
<keyword id="KW-0812">Transmembrane</keyword>
<keyword id="KW-1133">Transmembrane helix</keyword>
<keyword id="KW-0813">Transport</keyword>
<sequence>MLGEFRQFIARGNVMDLAVGVIIGGAFATITGSLTEDVIMPLVGALFGGVDFSNRFILLGSVPDGMSATDYAALKEAGVAMIGYGAFVTAVINFLILAFIIFLLVRWVNKVVRKPEADASPAGPSEVDLLTEIRDELRRK</sequence>
<gene>
    <name evidence="1" type="primary">mscL</name>
    <name type="ordered locus">Sala_0992</name>
</gene>
<dbReference type="EMBL" id="CP000356">
    <property type="protein sequence ID" value="ABF52709.1"/>
    <property type="molecule type" value="Genomic_DNA"/>
</dbReference>
<dbReference type="RefSeq" id="WP_011541297.1">
    <property type="nucleotide sequence ID" value="NC_008048.1"/>
</dbReference>
<dbReference type="STRING" id="317655.Sala_0992"/>
<dbReference type="KEGG" id="sal:Sala_0992"/>
<dbReference type="eggNOG" id="COG1970">
    <property type="taxonomic scope" value="Bacteria"/>
</dbReference>
<dbReference type="HOGENOM" id="CLU_095787_0_1_5"/>
<dbReference type="OrthoDB" id="9810350at2"/>
<dbReference type="Proteomes" id="UP000006578">
    <property type="component" value="Chromosome"/>
</dbReference>
<dbReference type="GO" id="GO:0005886">
    <property type="term" value="C:plasma membrane"/>
    <property type="evidence" value="ECO:0007669"/>
    <property type="project" value="UniProtKB-SubCell"/>
</dbReference>
<dbReference type="GO" id="GO:0008381">
    <property type="term" value="F:mechanosensitive monoatomic ion channel activity"/>
    <property type="evidence" value="ECO:0007669"/>
    <property type="project" value="UniProtKB-UniRule"/>
</dbReference>
<dbReference type="Gene3D" id="1.10.1200.120">
    <property type="entry name" value="Large-conductance mechanosensitive channel, MscL, domain 1"/>
    <property type="match status" value="1"/>
</dbReference>
<dbReference type="HAMAP" id="MF_00115">
    <property type="entry name" value="MscL"/>
    <property type="match status" value="1"/>
</dbReference>
<dbReference type="InterPro" id="IPR019823">
    <property type="entry name" value="Mechanosensitive_channel_CS"/>
</dbReference>
<dbReference type="InterPro" id="IPR001185">
    <property type="entry name" value="MS_channel"/>
</dbReference>
<dbReference type="InterPro" id="IPR037673">
    <property type="entry name" value="MSC/AndL"/>
</dbReference>
<dbReference type="InterPro" id="IPR036019">
    <property type="entry name" value="MscL_channel"/>
</dbReference>
<dbReference type="NCBIfam" id="TIGR00220">
    <property type="entry name" value="mscL"/>
    <property type="match status" value="1"/>
</dbReference>
<dbReference type="NCBIfam" id="NF010557">
    <property type="entry name" value="PRK13952.1"/>
    <property type="match status" value="1"/>
</dbReference>
<dbReference type="PANTHER" id="PTHR30266:SF2">
    <property type="entry name" value="LARGE-CONDUCTANCE MECHANOSENSITIVE CHANNEL"/>
    <property type="match status" value="1"/>
</dbReference>
<dbReference type="PANTHER" id="PTHR30266">
    <property type="entry name" value="MECHANOSENSITIVE CHANNEL MSCL"/>
    <property type="match status" value="1"/>
</dbReference>
<dbReference type="Pfam" id="PF01741">
    <property type="entry name" value="MscL"/>
    <property type="match status" value="1"/>
</dbReference>
<dbReference type="PRINTS" id="PR01264">
    <property type="entry name" value="MECHCHANNEL"/>
</dbReference>
<dbReference type="SUPFAM" id="SSF81330">
    <property type="entry name" value="Gated mechanosensitive channel"/>
    <property type="match status" value="1"/>
</dbReference>
<dbReference type="PROSITE" id="PS01327">
    <property type="entry name" value="MSCL"/>
    <property type="match status" value="1"/>
</dbReference>
<feature type="chain" id="PRO_1000057761" description="Large-conductance mechanosensitive channel">
    <location>
        <begin position="1"/>
        <end position="140"/>
    </location>
</feature>
<feature type="transmembrane region" description="Helical" evidence="1">
    <location>
        <begin position="14"/>
        <end position="34"/>
    </location>
</feature>
<feature type="transmembrane region" description="Helical" evidence="1">
    <location>
        <begin position="85"/>
        <end position="105"/>
    </location>
</feature>
<organism>
    <name type="scientific">Sphingopyxis alaskensis (strain DSM 13593 / LMG 18877 / RB2256)</name>
    <name type="common">Sphingomonas alaskensis</name>
    <dbReference type="NCBI Taxonomy" id="317655"/>
    <lineage>
        <taxon>Bacteria</taxon>
        <taxon>Pseudomonadati</taxon>
        <taxon>Pseudomonadota</taxon>
        <taxon>Alphaproteobacteria</taxon>
        <taxon>Sphingomonadales</taxon>
        <taxon>Sphingomonadaceae</taxon>
        <taxon>Sphingopyxis</taxon>
    </lineage>
</organism>
<evidence type="ECO:0000255" key="1">
    <source>
        <dbReference type="HAMAP-Rule" id="MF_00115"/>
    </source>
</evidence>
<proteinExistence type="inferred from homology"/>
<accession>Q1GUG3</accession>